<accession>Q9USP5</accession>
<keyword id="KW-1015">Disulfide bond</keyword>
<keyword id="KW-0256">Endoplasmic reticulum</keyword>
<keyword id="KW-0325">Glycoprotein</keyword>
<keyword id="KW-0337">GPI-anchor biosynthesis</keyword>
<keyword id="KW-0378">Hydrolase</keyword>
<keyword id="KW-0472">Membrane</keyword>
<keyword id="KW-0645">Protease</keyword>
<keyword id="KW-1185">Reference proteome</keyword>
<keyword id="KW-0732">Signal</keyword>
<keyword id="KW-0788">Thiol protease</keyword>
<keyword id="KW-0812">Transmembrane</keyword>
<keyword id="KW-1133">Transmembrane helix</keyword>
<evidence type="ECO:0000250" key="1"/>
<evidence type="ECO:0000255" key="2"/>
<evidence type="ECO:0000305" key="3"/>
<dbReference type="EC" id="3.-.-.-"/>
<dbReference type="EMBL" id="AJ250428">
    <property type="protein sequence ID" value="CAC13970.1"/>
    <property type="molecule type" value="mRNA"/>
</dbReference>
<dbReference type="EMBL" id="CU329672">
    <property type="protein sequence ID" value="CAB57844.1"/>
    <property type="molecule type" value="Genomic_DNA"/>
</dbReference>
<dbReference type="PIR" id="T40853">
    <property type="entry name" value="T40853"/>
</dbReference>
<dbReference type="RefSeq" id="NP_588198.1">
    <property type="nucleotide sequence ID" value="NM_001023188.2"/>
</dbReference>
<dbReference type="SMR" id="Q9USP5"/>
<dbReference type="ComplexPortal" id="CPX-10141">
    <property type="entry name" value="GPI-anchor transamidase complex"/>
</dbReference>
<dbReference type="FunCoup" id="Q9USP5">
    <property type="interactions" value="389"/>
</dbReference>
<dbReference type="STRING" id="284812.Q9USP5"/>
<dbReference type="MEROPS" id="C13.005"/>
<dbReference type="GlyCosmos" id="Q9USP5">
    <property type="glycosylation" value="1 site, No reported glycans"/>
</dbReference>
<dbReference type="iPTMnet" id="Q9USP5"/>
<dbReference type="PaxDb" id="4896-SPCC11E10.02c.1"/>
<dbReference type="EnsemblFungi" id="SPCC11E10.02c.1">
    <property type="protein sequence ID" value="SPCC11E10.02c.1:pep"/>
    <property type="gene ID" value="SPCC11E10.02c"/>
</dbReference>
<dbReference type="GeneID" id="2539272"/>
<dbReference type="KEGG" id="spo:2539272"/>
<dbReference type="PomBase" id="SPCC11E10.02c">
    <property type="gene designation" value="gpi8"/>
</dbReference>
<dbReference type="VEuPathDB" id="FungiDB:SPCC11E10.02c"/>
<dbReference type="eggNOG" id="KOG1349">
    <property type="taxonomic scope" value="Eukaryota"/>
</dbReference>
<dbReference type="HOGENOM" id="CLU_044656_2_1_1"/>
<dbReference type="InParanoid" id="Q9USP5"/>
<dbReference type="OMA" id="VMESQFP"/>
<dbReference type="PhylomeDB" id="Q9USP5"/>
<dbReference type="UniPathway" id="UPA00196"/>
<dbReference type="PRO" id="PR:Q9USP5"/>
<dbReference type="Proteomes" id="UP000002485">
    <property type="component" value="Chromosome III"/>
</dbReference>
<dbReference type="GO" id="GO:0005783">
    <property type="term" value="C:endoplasmic reticulum"/>
    <property type="evidence" value="ECO:0007005"/>
    <property type="project" value="PomBase"/>
</dbReference>
<dbReference type="GO" id="GO:0042765">
    <property type="term" value="C:GPI-anchor transamidase complex"/>
    <property type="evidence" value="ECO:0000318"/>
    <property type="project" value="GO_Central"/>
</dbReference>
<dbReference type="GO" id="GO:0003923">
    <property type="term" value="F:GPI-anchor transamidase activity"/>
    <property type="evidence" value="ECO:0000318"/>
    <property type="project" value="GO_Central"/>
</dbReference>
<dbReference type="GO" id="GO:0016255">
    <property type="term" value="P:attachment of GPI anchor to protein"/>
    <property type="evidence" value="ECO:0000318"/>
    <property type="project" value="GO_Central"/>
</dbReference>
<dbReference type="GO" id="GO:0006506">
    <property type="term" value="P:GPI anchor biosynthetic process"/>
    <property type="evidence" value="ECO:0000266"/>
    <property type="project" value="PomBase"/>
</dbReference>
<dbReference type="GO" id="GO:0006508">
    <property type="term" value="P:proteolysis"/>
    <property type="evidence" value="ECO:0007669"/>
    <property type="project" value="UniProtKB-KW"/>
</dbReference>
<dbReference type="FunFam" id="3.40.50.1460:FF:000021">
    <property type="entry name" value="GPI-anchor transamidase"/>
    <property type="match status" value="1"/>
</dbReference>
<dbReference type="Gene3D" id="3.40.50.1460">
    <property type="match status" value="1"/>
</dbReference>
<dbReference type="InterPro" id="IPR028361">
    <property type="entry name" value="GPI_transamidase"/>
</dbReference>
<dbReference type="InterPro" id="IPR001096">
    <property type="entry name" value="Peptidase_C13"/>
</dbReference>
<dbReference type="PANTHER" id="PTHR48067">
    <property type="entry name" value="GPI-ANCHOR TRANSAMIDASE"/>
    <property type="match status" value="1"/>
</dbReference>
<dbReference type="PANTHER" id="PTHR48067:SF1">
    <property type="entry name" value="GPI-ANCHOR TRANSAMIDASE"/>
    <property type="match status" value="1"/>
</dbReference>
<dbReference type="Pfam" id="PF01650">
    <property type="entry name" value="Peptidase_C13"/>
    <property type="match status" value="1"/>
</dbReference>
<dbReference type="PIRSF" id="PIRSF500138">
    <property type="entry name" value="GPI8"/>
    <property type="match status" value="1"/>
</dbReference>
<dbReference type="PIRSF" id="PIRSF019663">
    <property type="entry name" value="Legumain"/>
    <property type="match status" value="1"/>
</dbReference>
<dbReference type="PRINTS" id="PR00776">
    <property type="entry name" value="HEMOGLOBNASE"/>
</dbReference>
<reference key="1">
    <citation type="journal article" date="2001" name="Yeast">
        <title>The Schizosaccharomyces pombe GPI8 gene complements a Saccharomyces cerevisiae GPI8 anchoring mutant.</title>
        <authorList>
            <person name="Shams-Eldin H."/>
            <person name="Azzouz N."/>
            <person name="Eckert V."/>
            <person name="Blaschke T."/>
            <person name="Kedees M.H."/>
            <person name="Huebel A."/>
            <person name="Schwarz R.T."/>
        </authorList>
    </citation>
    <scope>NUCLEOTIDE SEQUENCE [MRNA]</scope>
</reference>
<reference key="2">
    <citation type="journal article" date="2002" name="Nature">
        <title>The genome sequence of Schizosaccharomyces pombe.</title>
        <authorList>
            <person name="Wood V."/>
            <person name="Gwilliam R."/>
            <person name="Rajandream M.A."/>
            <person name="Lyne M.H."/>
            <person name="Lyne R."/>
            <person name="Stewart A."/>
            <person name="Sgouros J.G."/>
            <person name="Peat N."/>
            <person name="Hayles J."/>
            <person name="Baker S.G."/>
            <person name="Basham D."/>
            <person name="Bowman S."/>
            <person name="Brooks K."/>
            <person name="Brown D."/>
            <person name="Brown S."/>
            <person name="Chillingworth T."/>
            <person name="Churcher C.M."/>
            <person name="Collins M."/>
            <person name="Connor R."/>
            <person name="Cronin A."/>
            <person name="Davis P."/>
            <person name="Feltwell T."/>
            <person name="Fraser A."/>
            <person name="Gentles S."/>
            <person name="Goble A."/>
            <person name="Hamlin N."/>
            <person name="Harris D.E."/>
            <person name="Hidalgo J."/>
            <person name="Hodgson G."/>
            <person name="Holroyd S."/>
            <person name="Hornsby T."/>
            <person name="Howarth S."/>
            <person name="Huckle E.J."/>
            <person name="Hunt S."/>
            <person name="Jagels K."/>
            <person name="James K.D."/>
            <person name="Jones L."/>
            <person name="Jones M."/>
            <person name="Leather S."/>
            <person name="McDonald S."/>
            <person name="McLean J."/>
            <person name="Mooney P."/>
            <person name="Moule S."/>
            <person name="Mungall K.L."/>
            <person name="Murphy L.D."/>
            <person name="Niblett D."/>
            <person name="Odell C."/>
            <person name="Oliver K."/>
            <person name="O'Neil S."/>
            <person name="Pearson D."/>
            <person name="Quail M.A."/>
            <person name="Rabbinowitsch E."/>
            <person name="Rutherford K.M."/>
            <person name="Rutter S."/>
            <person name="Saunders D."/>
            <person name="Seeger K."/>
            <person name="Sharp S."/>
            <person name="Skelton J."/>
            <person name="Simmonds M.N."/>
            <person name="Squares R."/>
            <person name="Squares S."/>
            <person name="Stevens K."/>
            <person name="Taylor K."/>
            <person name="Taylor R.G."/>
            <person name="Tivey A."/>
            <person name="Walsh S.V."/>
            <person name="Warren T."/>
            <person name="Whitehead S."/>
            <person name="Woodward J.R."/>
            <person name="Volckaert G."/>
            <person name="Aert R."/>
            <person name="Robben J."/>
            <person name="Grymonprez B."/>
            <person name="Weltjens I."/>
            <person name="Vanstreels E."/>
            <person name="Rieger M."/>
            <person name="Schaefer M."/>
            <person name="Mueller-Auer S."/>
            <person name="Gabel C."/>
            <person name="Fuchs M."/>
            <person name="Duesterhoeft A."/>
            <person name="Fritzc C."/>
            <person name="Holzer E."/>
            <person name="Moestl D."/>
            <person name="Hilbert H."/>
            <person name="Borzym K."/>
            <person name="Langer I."/>
            <person name="Beck A."/>
            <person name="Lehrach H."/>
            <person name="Reinhardt R."/>
            <person name="Pohl T.M."/>
            <person name="Eger P."/>
            <person name="Zimmermann W."/>
            <person name="Wedler H."/>
            <person name="Wambutt R."/>
            <person name="Purnelle B."/>
            <person name="Goffeau A."/>
            <person name="Cadieu E."/>
            <person name="Dreano S."/>
            <person name="Gloux S."/>
            <person name="Lelaure V."/>
            <person name="Mottier S."/>
            <person name="Galibert F."/>
            <person name="Aves S.J."/>
            <person name="Xiang Z."/>
            <person name="Hunt C."/>
            <person name="Moore K."/>
            <person name="Hurst S.M."/>
            <person name="Lucas M."/>
            <person name="Rochet M."/>
            <person name="Gaillardin C."/>
            <person name="Tallada V.A."/>
            <person name="Garzon A."/>
            <person name="Thode G."/>
            <person name="Daga R.R."/>
            <person name="Cruzado L."/>
            <person name="Jimenez J."/>
            <person name="Sanchez M."/>
            <person name="del Rey F."/>
            <person name="Benito J."/>
            <person name="Dominguez A."/>
            <person name="Revuelta J.L."/>
            <person name="Moreno S."/>
            <person name="Armstrong J."/>
            <person name="Forsburg S.L."/>
            <person name="Cerutti L."/>
            <person name="Lowe T."/>
            <person name="McCombie W.R."/>
            <person name="Paulsen I."/>
            <person name="Potashkin J."/>
            <person name="Shpakovski G.V."/>
            <person name="Ussery D."/>
            <person name="Barrell B.G."/>
            <person name="Nurse P."/>
        </authorList>
    </citation>
    <scope>NUCLEOTIDE SEQUENCE [LARGE SCALE GENOMIC DNA]</scope>
    <source>
        <strain>972 / ATCC 24843</strain>
    </source>
</reference>
<organism>
    <name type="scientific">Schizosaccharomyces pombe (strain 972 / ATCC 24843)</name>
    <name type="common">Fission yeast</name>
    <dbReference type="NCBI Taxonomy" id="284812"/>
    <lineage>
        <taxon>Eukaryota</taxon>
        <taxon>Fungi</taxon>
        <taxon>Dikarya</taxon>
        <taxon>Ascomycota</taxon>
        <taxon>Taphrinomycotina</taxon>
        <taxon>Schizosaccharomycetes</taxon>
        <taxon>Schizosaccharomycetales</taxon>
        <taxon>Schizosaccharomycetaceae</taxon>
        <taxon>Schizosaccharomyces</taxon>
    </lineage>
</organism>
<proteinExistence type="evidence at transcript level"/>
<feature type="signal peptide" evidence="2">
    <location>
        <begin position="1"/>
        <end position="19"/>
    </location>
</feature>
<feature type="chain" id="PRO_0000026531" description="GPI-anchor transamidase">
    <location>
        <begin position="20"/>
        <end position="380"/>
    </location>
</feature>
<feature type="topological domain" description="Lumenal" evidence="2">
    <location>
        <begin position="20"/>
        <end position="354"/>
    </location>
</feature>
<feature type="transmembrane region" description="Helical" evidence="2">
    <location>
        <begin position="355"/>
        <end position="375"/>
    </location>
</feature>
<feature type="topological domain" description="Cytoplasmic" evidence="2">
    <location>
        <begin position="376"/>
        <end position="380"/>
    </location>
</feature>
<feature type="active site" evidence="1">
    <location>
        <position position="145"/>
    </location>
</feature>
<feature type="active site" evidence="1">
    <location>
        <position position="187"/>
    </location>
</feature>
<feature type="glycosylation site" description="N-linked (GlcNAc...) asparagine" evidence="2">
    <location>
        <position position="307"/>
    </location>
</feature>
<feature type="disulfide bond" description="Interchain (with C-182 in PIGT)" evidence="1">
    <location>
        <position position="73"/>
    </location>
</feature>
<name>GPI8_SCHPO</name>
<sequence length="380" mass="43206">MIVQFVALLLLNLLQIIAAESSHTNNWAVLISTSRFWFNYRHTANVLGIYRSVKRLGIPDSQIILMIADDYACNSRNLFPGTVFDNADRALDLYGEEIEIDYKGYEVTVEAFIRLLTERVPENTPASKRLLTNERSNILIYMTGHGGDGFIKFQDAEELSSEDLADAIEQIHQHKRYNEILFMVDTCQANSLYTKIYSPNVLAIGSSEVGTSSYSHHADIDIGVAVIDRFTFSNLEFLENRVDSKSKLTMQDLINSYNPYEIHSTPGVQPINLRRSPDDILITDFFGNVRDIELHSEKINWMLPGENTTKPSIKRNSFVFQAQNDMQDDGKGFGISNLKSFLPPTRELKYKKHPISRIISAVVCISFSIGFPYYASKYLK</sequence>
<comment type="function">
    <text evidence="1">Mediates GPI anchoring in the endoplasmic reticulum, by replacing a protein's C-terminal GPI attachment signal peptide with a pre-assembled GPI. During this transamidation reaction, the GPI transamidase forms a carbonyl intermediate with the substrate protein (By similarity).</text>
</comment>
<comment type="pathway">
    <text>Glycolipid biosynthesis; glycosylphosphatidylinositol-anchor biosynthesis.</text>
</comment>
<comment type="subunit">
    <text evidence="1">Forms a complex with PIG-T homolog, PIG-U homolog and PIG-S homolog.</text>
</comment>
<comment type="subcellular location">
    <subcellularLocation>
        <location evidence="1">Endoplasmic reticulum membrane</location>
        <topology evidence="1">Single-pass type I membrane protein</topology>
    </subcellularLocation>
</comment>
<comment type="PTM">
    <text evidence="1">The disulfide bond between PIGK/GPI8 and PIGT is important for normal enzyme activity.</text>
</comment>
<comment type="similarity">
    <text evidence="3">Belongs to the peptidase C13 family.</text>
</comment>
<gene>
    <name type="primary">gpi8</name>
    <name type="ORF">SPCC11E10.02c</name>
</gene>
<protein>
    <recommendedName>
        <fullName>GPI-anchor transamidase</fullName>
        <shortName>GPI transamidase</shortName>
        <ecNumber>3.-.-.-</ecNumber>
    </recommendedName>
</protein>